<organism>
    <name type="scientific">Salmonella paratyphi A (strain ATCC 9150 / SARB42)</name>
    <dbReference type="NCBI Taxonomy" id="295319"/>
    <lineage>
        <taxon>Bacteria</taxon>
        <taxon>Pseudomonadati</taxon>
        <taxon>Pseudomonadota</taxon>
        <taxon>Gammaproteobacteria</taxon>
        <taxon>Enterobacterales</taxon>
        <taxon>Enterobacteriaceae</taxon>
        <taxon>Salmonella</taxon>
    </lineage>
</organism>
<name>CEDA_SALPA</name>
<protein>
    <recommendedName>
        <fullName evidence="1">Cell division activator CedA</fullName>
    </recommendedName>
</protein>
<accession>Q5PHA6</accession>
<reference key="1">
    <citation type="journal article" date="2004" name="Nat. Genet.">
        <title>Comparison of genome degradation in Paratyphi A and Typhi, human-restricted serovars of Salmonella enterica that cause typhoid.</title>
        <authorList>
            <person name="McClelland M."/>
            <person name="Sanderson K.E."/>
            <person name="Clifton S.W."/>
            <person name="Latreille P."/>
            <person name="Porwollik S."/>
            <person name="Sabo A."/>
            <person name="Meyer R."/>
            <person name="Bieri T."/>
            <person name="Ozersky P."/>
            <person name="McLellan M."/>
            <person name="Harkins C.R."/>
            <person name="Wang C."/>
            <person name="Nguyen C."/>
            <person name="Berghoff A."/>
            <person name="Elliott G."/>
            <person name="Kohlberg S."/>
            <person name="Strong C."/>
            <person name="Du F."/>
            <person name="Carter J."/>
            <person name="Kremizki C."/>
            <person name="Layman D."/>
            <person name="Leonard S."/>
            <person name="Sun H."/>
            <person name="Fulton L."/>
            <person name="Nash W."/>
            <person name="Miner T."/>
            <person name="Minx P."/>
            <person name="Delehaunty K."/>
            <person name="Fronick C."/>
            <person name="Magrini V."/>
            <person name="Nhan M."/>
            <person name="Warren W."/>
            <person name="Florea L."/>
            <person name="Spieth J."/>
            <person name="Wilson R.K."/>
        </authorList>
    </citation>
    <scope>NUCLEOTIDE SEQUENCE [LARGE SCALE GENOMIC DNA]</scope>
    <source>
        <strain>ATCC 9150 / SARB42</strain>
    </source>
</reference>
<sequence length="80" mass="9372">MMKPLRQQNRQIISYIPRVEPAPPEHAIKMDTFRDVWILRGKYVAFVLTGESFQRSPAFSVPESAQRWANQVRQENEIAD</sequence>
<gene>
    <name evidence="1" type="primary">cedA</name>
    <name type="ordered locus">SPA1525</name>
</gene>
<evidence type="ECO:0000255" key="1">
    <source>
        <dbReference type="HAMAP-Rule" id="MF_01580"/>
    </source>
</evidence>
<keyword id="KW-0131">Cell cycle</keyword>
<keyword id="KW-0132">Cell division</keyword>
<keyword id="KW-0238">DNA-binding</keyword>
<comment type="function">
    <text evidence="1">Activates the cell division inhibited by chromosomal DNA over-replication.</text>
</comment>
<comment type="similarity">
    <text evidence="1">Belongs to the CedA family.</text>
</comment>
<proteinExistence type="inferred from homology"/>
<dbReference type="EMBL" id="CP000026">
    <property type="protein sequence ID" value="AAV77458.1"/>
    <property type="molecule type" value="Genomic_DNA"/>
</dbReference>
<dbReference type="RefSeq" id="WP_000977510.1">
    <property type="nucleotide sequence ID" value="NC_006511.1"/>
</dbReference>
<dbReference type="SMR" id="Q5PHA6"/>
<dbReference type="KEGG" id="spt:SPA1525"/>
<dbReference type="HOGENOM" id="CLU_167445_0_0_6"/>
<dbReference type="Proteomes" id="UP000008185">
    <property type="component" value="Chromosome"/>
</dbReference>
<dbReference type="GO" id="GO:0003677">
    <property type="term" value="F:DNA binding"/>
    <property type="evidence" value="ECO:0007669"/>
    <property type="project" value="UniProtKB-UniRule"/>
</dbReference>
<dbReference type="GO" id="GO:0051301">
    <property type="term" value="P:cell division"/>
    <property type="evidence" value="ECO:0007669"/>
    <property type="project" value="UniProtKB-UniRule"/>
</dbReference>
<dbReference type="Gene3D" id="3.30.730.20">
    <property type="entry name" value="Cell division activator CedA"/>
    <property type="match status" value="1"/>
</dbReference>
<dbReference type="HAMAP" id="MF_01580">
    <property type="entry name" value="CedA"/>
    <property type="match status" value="1"/>
</dbReference>
<dbReference type="InterPro" id="IPR038463">
    <property type="entry name" value="CedA-like_sf"/>
</dbReference>
<dbReference type="InterPro" id="IPR019666">
    <property type="entry name" value="Cell_div_activator_CedA"/>
</dbReference>
<dbReference type="NCBIfam" id="NF007510">
    <property type="entry name" value="PRK10113.1"/>
    <property type="match status" value="1"/>
</dbReference>
<dbReference type="Pfam" id="PF10729">
    <property type="entry name" value="CedA"/>
    <property type="match status" value="1"/>
</dbReference>
<feature type="chain" id="PRO_0000300214" description="Cell division activator CedA">
    <location>
        <begin position="1"/>
        <end position="80"/>
    </location>
</feature>